<organism>
    <name type="scientific">Parasynechococcus marenigrum (strain WH8102)</name>
    <dbReference type="NCBI Taxonomy" id="84588"/>
    <lineage>
        <taxon>Bacteria</taxon>
        <taxon>Bacillati</taxon>
        <taxon>Cyanobacteriota</taxon>
        <taxon>Cyanophyceae</taxon>
        <taxon>Synechococcales</taxon>
        <taxon>Prochlorococcaceae</taxon>
        <taxon>Parasynechococcus</taxon>
        <taxon>Parasynechococcus marenigrum</taxon>
    </lineage>
</organism>
<keyword id="KW-0963">Cytoplasm</keyword>
<keyword id="KW-0227">DNA damage</keyword>
<keyword id="KW-0233">DNA recombination</keyword>
<keyword id="KW-0234">DNA repair</keyword>
<keyword id="KW-0238">DNA-binding</keyword>
<reference key="1">
    <citation type="journal article" date="2003" name="Nature">
        <title>The genome of a motile marine Synechococcus.</title>
        <authorList>
            <person name="Palenik B."/>
            <person name="Brahamsha B."/>
            <person name="Larimer F.W."/>
            <person name="Land M.L."/>
            <person name="Hauser L."/>
            <person name="Chain P."/>
            <person name="Lamerdin J.E."/>
            <person name="Regala W."/>
            <person name="Allen E.E."/>
            <person name="McCarren J."/>
            <person name="Paulsen I.T."/>
            <person name="Dufresne A."/>
            <person name="Partensky F."/>
            <person name="Webb E.A."/>
            <person name="Waterbury J."/>
        </authorList>
    </citation>
    <scope>NUCLEOTIDE SEQUENCE [LARGE SCALE GENOMIC DNA]</scope>
    <source>
        <strain>WH8102</strain>
    </source>
</reference>
<evidence type="ECO:0000255" key="1">
    <source>
        <dbReference type="HAMAP-Rule" id="MF_00031"/>
    </source>
</evidence>
<comment type="function">
    <text evidence="1">The RuvA-RuvB-RuvC complex processes Holliday junction (HJ) DNA during genetic recombination and DNA repair, while the RuvA-RuvB complex plays an important role in the rescue of blocked DNA replication forks via replication fork reversal (RFR). RuvA specifically binds to HJ cruciform DNA, conferring on it an open structure. The RuvB hexamer acts as an ATP-dependent pump, pulling dsDNA into and through the RuvAB complex. HJ branch migration allows RuvC to scan DNA until it finds its consensus sequence, where it cleaves and resolves the cruciform DNA.</text>
</comment>
<comment type="subunit">
    <text evidence="1">Homotetramer. Forms an RuvA(8)-RuvB(12)-Holliday junction (HJ) complex. HJ DNA is sandwiched between 2 RuvA tetramers; dsDNA enters through RuvA and exits via RuvB. An RuvB hexamer assembles on each DNA strand where it exits the tetramer. Each RuvB hexamer is contacted by two RuvA subunits (via domain III) on 2 adjacent RuvB subunits; this complex drives branch migration. In the full resolvosome a probable DNA-RuvA(4)-RuvB(12)-RuvC(2) complex forms which resolves the HJ.</text>
</comment>
<comment type="subcellular location">
    <subcellularLocation>
        <location evidence="1">Cytoplasm</location>
    </subcellularLocation>
</comment>
<comment type="domain">
    <text evidence="1">Has three domains with a flexible linker between the domains II and III and assumes an 'L' shape. Domain III is highly mobile and contacts RuvB.</text>
</comment>
<comment type="similarity">
    <text evidence="1">Belongs to the RuvA family.</text>
</comment>
<dbReference type="EMBL" id="BX569691">
    <property type="protein sequence ID" value="CAE07550.1"/>
    <property type="molecule type" value="Genomic_DNA"/>
</dbReference>
<dbReference type="RefSeq" id="WP_011127900.1">
    <property type="nucleotide sequence ID" value="NC_005070.1"/>
</dbReference>
<dbReference type="SMR" id="Q7U7F0"/>
<dbReference type="STRING" id="84588.SYNW1035"/>
<dbReference type="KEGG" id="syw:SYNW1035"/>
<dbReference type="eggNOG" id="COG0632">
    <property type="taxonomic scope" value="Bacteria"/>
</dbReference>
<dbReference type="HOGENOM" id="CLU_087936_0_0_3"/>
<dbReference type="Proteomes" id="UP000001422">
    <property type="component" value="Chromosome"/>
</dbReference>
<dbReference type="GO" id="GO:0005737">
    <property type="term" value="C:cytoplasm"/>
    <property type="evidence" value="ECO:0007669"/>
    <property type="project" value="UniProtKB-SubCell"/>
</dbReference>
<dbReference type="GO" id="GO:0009379">
    <property type="term" value="C:Holliday junction helicase complex"/>
    <property type="evidence" value="ECO:0007669"/>
    <property type="project" value="InterPro"/>
</dbReference>
<dbReference type="GO" id="GO:0048476">
    <property type="term" value="C:Holliday junction resolvase complex"/>
    <property type="evidence" value="ECO:0007669"/>
    <property type="project" value="UniProtKB-UniRule"/>
</dbReference>
<dbReference type="GO" id="GO:0005524">
    <property type="term" value="F:ATP binding"/>
    <property type="evidence" value="ECO:0007669"/>
    <property type="project" value="InterPro"/>
</dbReference>
<dbReference type="GO" id="GO:0000400">
    <property type="term" value="F:four-way junction DNA binding"/>
    <property type="evidence" value="ECO:0007669"/>
    <property type="project" value="UniProtKB-UniRule"/>
</dbReference>
<dbReference type="GO" id="GO:0009378">
    <property type="term" value="F:four-way junction helicase activity"/>
    <property type="evidence" value="ECO:0007669"/>
    <property type="project" value="InterPro"/>
</dbReference>
<dbReference type="GO" id="GO:0006310">
    <property type="term" value="P:DNA recombination"/>
    <property type="evidence" value="ECO:0007669"/>
    <property type="project" value="UniProtKB-UniRule"/>
</dbReference>
<dbReference type="GO" id="GO:0006281">
    <property type="term" value="P:DNA repair"/>
    <property type="evidence" value="ECO:0007669"/>
    <property type="project" value="UniProtKB-UniRule"/>
</dbReference>
<dbReference type="Gene3D" id="1.10.150.20">
    <property type="entry name" value="5' to 3' exonuclease, C-terminal subdomain"/>
    <property type="match status" value="1"/>
</dbReference>
<dbReference type="Gene3D" id="2.40.50.140">
    <property type="entry name" value="Nucleic acid-binding proteins"/>
    <property type="match status" value="1"/>
</dbReference>
<dbReference type="HAMAP" id="MF_00031">
    <property type="entry name" value="DNA_HJ_migration_RuvA"/>
    <property type="match status" value="1"/>
</dbReference>
<dbReference type="InterPro" id="IPR013849">
    <property type="entry name" value="DNA_helicase_Holl-junc_RuvA_I"/>
</dbReference>
<dbReference type="InterPro" id="IPR003583">
    <property type="entry name" value="Hlx-hairpin-Hlx_DNA-bd_motif"/>
</dbReference>
<dbReference type="InterPro" id="IPR012340">
    <property type="entry name" value="NA-bd_OB-fold"/>
</dbReference>
<dbReference type="InterPro" id="IPR000085">
    <property type="entry name" value="RuvA"/>
</dbReference>
<dbReference type="InterPro" id="IPR010994">
    <property type="entry name" value="RuvA_2-like"/>
</dbReference>
<dbReference type="InterPro" id="IPR011114">
    <property type="entry name" value="RuvA_C"/>
</dbReference>
<dbReference type="NCBIfam" id="TIGR00084">
    <property type="entry name" value="ruvA"/>
    <property type="match status" value="1"/>
</dbReference>
<dbReference type="Pfam" id="PF14520">
    <property type="entry name" value="HHH_5"/>
    <property type="match status" value="1"/>
</dbReference>
<dbReference type="Pfam" id="PF07499">
    <property type="entry name" value="RuvA_C"/>
    <property type="match status" value="1"/>
</dbReference>
<dbReference type="Pfam" id="PF01330">
    <property type="entry name" value="RuvA_N"/>
    <property type="match status" value="1"/>
</dbReference>
<dbReference type="SMART" id="SM00278">
    <property type="entry name" value="HhH1"/>
    <property type="match status" value="2"/>
</dbReference>
<dbReference type="SUPFAM" id="SSF50249">
    <property type="entry name" value="Nucleic acid-binding proteins"/>
    <property type="match status" value="1"/>
</dbReference>
<dbReference type="SUPFAM" id="SSF47781">
    <property type="entry name" value="RuvA domain 2-like"/>
    <property type="match status" value="1"/>
</dbReference>
<feature type="chain" id="PRO_0000094698" description="Holliday junction branch migration complex subunit RuvA">
    <location>
        <begin position="1"/>
        <end position="205"/>
    </location>
</feature>
<feature type="region of interest" description="Domain I" evidence="1">
    <location>
        <begin position="1"/>
        <end position="67"/>
    </location>
</feature>
<feature type="region of interest" description="Domain II" evidence="1">
    <location>
        <begin position="68"/>
        <end position="146"/>
    </location>
</feature>
<feature type="region of interest" description="Flexible linker" evidence="1">
    <location>
        <begin position="147"/>
        <end position="155"/>
    </location>
</feature>
<feature type="region of interest" description="Domain III" evidence="1">
    <location>
        <begin position="155"/>
        <end position="205"/>
    </location>
</feature>
<name>RUVA_PARMW</name>
<accession>Q7U7F0</accession>
<proteinExistence type="inferred from homology"/>
<protein>
    <recommendedName>
        <fullName evidence="1">Holliday junction branch migration complex subunit RuvA</fullName>
    </recommendedName>
</protein>
<gene>
    <name evidence="1" type="primary">ruvA</name>
    <name type="ordered locus">SYNW1035</name>
</gene>
<sequence length="205" mass="22645">MIGWLKGDVQHRDQKGSRNLVLIACGGVGYDVQLIERDWQAVSTDQRHEFWIHQVVSADNLQLFGFLQLAERDLFRELIQVSGVGPQAGLALLNACAYKELVTALVHSDLKTLCRAKGVGKRTAERLALELRTRLTDSVASTGPERNQLDPVAPDLIATLETLGFETHEIRDALQRLNGMGGPQDGDDDDAWLRACIKLMSSTDP</sequence>